<comment type="function">
    <text evidence="1">Specifically methylates the N7 position of guanine in position 527 of 16S rRNA.</text>
</comment>
<comment type="catalytic activity">
    <reaction evidence="1">
        <text>guanosine(527) in 16S rRNA + S-adenosyl-L-methionine = N(7)-methylguanosine(527) in 16S rRNA + S-adenosyl-L-homocysteine</text>
        <dbReference type="Rhea" id="RHEA:42732"/>
        <dbReference type="Rhea" id="RHEA-COMP:10209"/>
        <dbReference type="Rhea" id="RHEA-COMP:10210"/>
        <dbReference type="ChEBI" id="CHEBI:57856"/>
        <dbReference type="ChEBI" id="CHEBI:59789"/>
        <dbReference type="ChEBI" id="CHEBI:74269"/>
        <dbReference type="ChEBI" id="CHEBI:74480"/>
        <dbReference type="EC" id="2.1.1.170"/>
    </reaction>
</comment>
<comment type="subcellular location">
    <subcellularLocation>
        <location evidence="1">Cytoplasm</location>
    </subcellularLocation>
</comment>
<comment type="similarity">
    <text evidence="1">Belongs to the methyltransferase superfamily. RNA methyltransferase RsmG family.</text>
</comment>
<accession>B2FNF9</accession>
<keyword id="KW-0963">Cytoplasm</keyword>
<keyword id="KW-0489">Methyltransferase</keyword>
<keyword id="KW-1185">Reference proteome</keyword>
<keyword id="KW-0698">rRNA processing</keyword>
<keyword id="KW-0949">S-adenosyl-L-methionine</keyword>
<keyword id="KW-0808">Transferase</keyword>
<evidence type="ECO:0000255" key="1">
    <source>
        <dbReference type="HAMAP-Rule" id="MF_00074"/>
    </source>
</evidence>
<sequence>MSEHPLPASVAATLEQGLASMGLDAALAPPLLRYLALLHRWNGTYNLTAIRDPQEMVTRHLLDSLAMQPFVADGSLADLGTGPGLPGIPLAIACPGLQVTLVESNGKKARFMREAVRQLGLGNARVAESRAEALDEAGRYDQLTARAMDTLAGIVRVGGHLLRPGGVLLAMKGVYPHEEIAELPAGWQVREVTPLSVPGLAGERHLVTVTGP</sequence>
<gene>
    <name evidence="1" type="primary">rsmG</name>
    <name type="ordered locus">Smlt4616</name>
</gene>
<protein>
    <recommendedName>
        <fullName evidence="1">Ribosomal RNA small subunit methyltransferase G</fullName>
        <ecNumber evidence="1">2.1.1.170</ecNumber>
    </recommendedName>
    <alternativeName>
        <fullName evidence="1">16S rRNA 7-methylguanosine methyltransferase</fullName>
        <shortName evidence="1">16S rRNA m7G methyltransferase</shortName>
    </alternativeName>
</protein>
<proteinExistence type="inferred from homology"/>
<reference key="1">
    <citation type="journal article" date="2008" name="Genome Biol.">
        <title>The complete genome, comparative and functional analysis of Stenotrophomonas maltophilia reveals an organism heavily shielded by drug resistance determinants.</title>
        <authorList>
            <person name="Crossman L.C."/>
            <person name="Gould V.C."/>
            <person name="Dow J.M."/>
            <person name="Vernikos G.S."/>
            <person name="Okazaki A."/>
            <person name="Sebaihia M."/>
            <person name="Saunders D."/>
            <person name="Arrowsmith C."/>
            <person name="Carver T."/>
            <person name="Peters N."/>
            <person name="Adlem E."/>
            <person name="Kerhornou A."/>
            <person name="Lord A."/>
            <person name="Murphy L."/>
            <person name="Seeger K."/>
            <person name="Squares R."/>
            <person name="Rutter S."/>
            <person name="Quail M.A."/>
            <person name="Rajandream M.A."/>
            <person name="Harris D."/>
            <person name="Churcher C."/>
            <person name="Bentley S.D."/>
            <person name="Parkhill J."/>
            <person name="Thomson N.R."/>
            <person name="Avison M.B."/>
        </authorList>
    </citation>
    <scope>NUCLEOTIDE SEQUENCE [LARGE SCALE GENOMIC DNA]</scope>
    <source>
        <strain>K279a</strain>
    </source>
</reference>
<feature type="chain" id="PRO_1000092656" description="Ribosomal RNA small subunit methyltransferase G">
    <location>
        <begin position="1"/>
        <end position="212"/>
    </location>
</feature>
<feature type="binding site" evidence="1">
    <location>
        <position position="80"/>
    </location>
    <ligand>
        <name>S-adenosyl-L-methionine</name>
        <dbReference type="ChEBI" id="CHEBI:59789"/>
    </ligand>
</feature>
<feature type="binding site" evidence="1">
    <location>
        <position position="85"/>
    </location>
    <ligand>
        <name>S-adenosyl-L-methionine</name>
        <dbReference type="ChEBI" id="CHEBI:59789"/>
    </ligand>
</feature>
<feature type="binding site" evidence="1">
    <location>
        <begin position="131"/>
        <end position="132"/>
    </location>
    <ligand>
        <name>S-adenosyl-L-methionine</name>
        <dbReference type="ChEBI" id="CHEBI:59789"/>
    </ligand>
</feature>
<feature type="binding site" evidence="1">
    <location>
        <position position="146"/>
    </location>
    <ligand>
        <name>S-adenosyl-L-methionine</name>
        <dbReference type="ChEBI" id="CHEBI:59789"/>
    </ligand>
</feature>
<organism>
    <name type="scientific">Stenotrophomonas maltophilia (strain K279a)</name>
    <dbReference type="NCBI Taxonomy" id="522373"/>
    <lineage>
        <taxon>Bacteria</taxon>
        <taxon>Pseudomonadati</taxon>
        <taxon>Pseudomonadota</taxon>
        <taxon>Gammaproteobacteria</taxon>
        <taxon>Lysobacterales</taxon>
        <taxon>Lysobacteraceae</taxon>
        <taxon>Stenotrophomonas</taxon>
        <taxon>Stenotrophomonas maltophilia group</taxon>
    </lineage>
</organism>
<dbReference type="EC" id="2.1.1.170" evidence="1"/>
<dbReference type="EMBL" id="AM743169">
    <property type="protein sequence ID" value="CAQ47970.1"/>
    <property type="molecule type" value="Genomic_DNA"/>
</dbReference>
<dbReference type="RefSeq" id="WP_012481632.1">
    <property type="nucleotide sequence ID" value="NC_010943.1"/>
</dbReference>
<dbReference type="SMR" id="B2FNF9"/>
<dbReference type="EnsemblBacteria" id="CAQ47970">
    <property type="protein sequence ID" value="CAQ47970"/>
    <property type="gene ID" value="Smlt4616"/>
</dbReference>
<dbReference type="GeneID" id="90527148"/>
<dbReference type="KEGG" id="sml:Smlt4616"/>
<dbReference type="eggNOG" id="COG0357">
    <property type="taxonomic scope" value="Bacteria"/>
</dbReference>
<dbReference type="HOGENOM" id="CLU_065341_2_0_6"/>
<dbReference type="Proteomes" id="UP000008840">
    <property type="component" value="Chromosome"/>
</dbReference>
<dbReference type="GO" id="GO:0005829">
    <property type="term" value="C:cytosol"/>
    <property type="evidence" value="ECO:0007669"/>
    <property type="project" value="TreeGrafter"/>
</dbReference>
<dbReference type="GO" id="GO:0070043">
    <property type="term" value="F:rRNA (guanine-N7-)-methyltransferase activity"/>
    <property type="evidence" value="ECO:0007669"/>
    <property type="project" value="UniProtKB-UniRule"/>
</dbReference>
<dbReference type="CDD" id="cd02440">
    <property type="entry name" value="AdoMet_MTases"/>
    <property type="match status" value="1"/>
</dbReference>
<dbReference type="Gene3D" id="3.40.50.150">
    <property type="entry name" value="Vaccinia Virus protein VP39"/>
    <property type="match status" value="1"/>
</dbReference>
<dbReference type="HAMAP" id="MF_00074">
    <property type="entry name" value="16SrRNA_methyltr_G"/>
    <property type="match status" value="1"/>
</dbReference>
<dbReference type="InterPro" id="IPR003682">
    <property type="entry name" value="rRNA_ssu_MeTfrase_G"/>
</dbReference>
<dbReference type="InterPro" id="IPR029063">
    <property type="entry name" value="SAM-dependent_MTases_sf"/>
</dbReference>
<dbReference type="NCBIfam" id="TIGR00138">
    <property type="entry name" value="rsmG_gidB"/>
    <property type="match status" value="1"/>
</dbReference>
<dbReference type="PANTHER" id="PTHR31760">
    <property type="entry name" value="S-ADENOSYL-L-METHIONINE-DEPENDENT METHYLTRANSFERASES SUPERFAMILY PROTEIN"/>
    <property type="match status" value="1"/>
</dbReference>
<dbReference type="PANTHER" id="PTHR31760:SF0">
    <property type="entry name" value="S-ADENOSYL-L-METHIONINE-DEPENDENT METHYLTRANSFERASES SUPERFAMILY PROTEIN"/>
    <property type="match status" value="1"/>
</dbReference>
<dbReference type="Pfam" id="PF02527">
    <property type="entry name" value="GidB"/>
    <property type="match status" value="1"/>
</dbReference>
<dbReference type="PIRSF" id="PIRSF003078">
    <property type="entry name" value="GidB"/>
    <property type="match status" value="1"/>
</dbReference>
<dbReference type="SUPFAM" id="SSF53335">
    <property type="entry name" value="S-adenosyl-L-methionine-dependent methyltransferases"/>
    <property type="match status" value="1"/>
</dbReference>
<name>RSMG_STRMK</name>